<organism>
    <name type="scientific">Mus musculus</name>
    <name type="common">Mouse</name>
    <dbReference type="NCBI Taxonomy" id="10090"/>
    <lineage>
        <taxon>Eukaryota</taxon>
        <taxon>Metazoa</taxon>
        <taxon>Chordata</taxon>
        <taxon>Craniata</taxon>
        <taxon>Vertebrata</taxon>
        <taxon>Euteleostomi</taxon>
        <taxon>Mammalia</taxon>
        <taxon>Eutheria</taxon>
        <taxon>Euarchontoglires</taxon>
        <taxon>Glires</taxon>
        <taxon>Rodentia</taxon>
        <taxon>Myomorpha</taxon>
        <taxon>Muroidea</taxon>
        <taxon>Muridae</taxon>
        <taxon>Murinae</taxon>
        <taxon>Mus</taxon>
        <taxon>Mus</taxon>
    </lineage>
</organism>
<keyword id="KW-0256">Endoplasmic reticulum</keyword>
<keyword id="KW-0328">Glycosyltransferase</keyword>
<keyword id="KW-0472">Membrane</keyword>
<keyword id="KW-1185">Reference proteome</keyword>
<keyword id="KW-0735">Signal-anchor</keyword>
<keyword id="KW-0808">Transferase</keyword>
<keyword id="KW-0812">Transmembrane</keyword>
<keyword id="KW-1133">Transmembrane helix</keyword>
<sequence length="324" mass="36791">MATLLLQLLGLGVALAAAALILVSIVAFITATKMPPCYQHEEEKFFLNAKGQKEALPSIWDSPTKQLSVVVPSYNEEKRLPVMMDEALNYLEKRQKHDCTFTYEVIVVDDGSEDQTSKVALKYCQKYGSDKVRVITLVRNRGKGGAVRMGVFSSRGEKILMADADGATKFPDVEKLEKGLSDLQPWPEQMAIACGSRAHLEKESIAQRSYFRTFLMYGFHFLVWFLCVKGIRDTQCGFKLLTREAAARTFSSLHIERWAFDVELLYIAQCLQIPIAEVAVNWTEIEGSKLVPFWSWLQMGKDLLFIRLRYLTGAWRLKQTRKAS</sequence>
<protein>
    <recommendedName>
        <fullName evidence="1">Dolichyl-phosphate beta-glucosyltransferase</fullName>
        <shortName evidence="1">DolP-glucosyltransferase</shortName>
        <ecNumber evidence="1">2.4.1.117</ecNumber>
    </recommendedName>
    <alternativeName>
        <fullName evidence="4">Asparagine-linked glycosylation protein 5 homolog</fullName>
    </alternativeName>
</protein>
<evidence type="ECO:0000250" key="1">
    <source>
        <dbReference type="UniProtKB" id="Q9Y673"/>
    </source>
</evidence>
<evidence type="ECO:0000255" key="2"/>
<evidence type="ECO:0000305" key="3"/>
<evidence type="ECO:0000312" key="4">
    <source>
        <dbReference type="MGI" id="MGI:1913498"/>
    </source>
</evidence>
<name>ALG5_MOUSE</name>
<feature type="chain" id="PRO_0000059099" description="Dolichyl-phosphate beta-glucosyltransferase">
    <location>
        <begin position="1"/>
        <end position="324"/>
    </location>
</feature>
<feature type="topological domain" description="Lumenal" evidence="2">
    <location>
        <begin position="1"/>
        <end position="7"/>
    </location>
</feature>
<feature type="transmembrane region" description="Helical" evidence="2">
    <location>
        <begin position="8"/>
        <end position="28"/>
    </location>
</feature>
<feature type="topological domain" description="Cytoplasmic" evidence="2">
    <location>
        <begin position="29"/>
        <end position="324"/>
    </location>
</feature>
<accession>Q9DB25</accession>
<proteinExistence type="evidence at protein level"/>
<reference key="1">
    <citation type="journal article" date="2005" name="Science">
        <title>The transcriptional landscape of the mammalian genome.</title>
        <authorList>
            <person name="Carninci P."/>
            <person name="Kasukawa T."/>
            <person name="Katayama S."/>
            <person name="Gough J."/>
            <person name="Frith M.C."/>
            <person name="Maeda N."/>
            <person name="Oyama R."/>
            <person name="Ravasi T."/>
            <person name="Lenhard B."/>
            <person name="Wells C."/>
            <person name="Kodzius R."/>
            <person name="Shimokawa K."/>
            <person name="Bajic V.B."/>
            <person name="Brenner S.E."/>
            <person name="Batalov S."/>
            <person name="Forrest A.R."/>
            <person name="Zavolan M."/>
            <person name="Davis M.J."/>
            <person name="Wilming L.G."/>
            <person name="Aidinis V."/>
            <person name="Allen J.E."/>
            <person name="Ambesi-Impiombato A."/>
            <person name="Apweiler R."/>
            <person name="Aturaliya R.N."/>
            <person name="Bailey T.L."/>
            <person name="Bansal M."/>
            <person name="Baxter L."/>
            <person name="Beisel K.W."/>
            <person name="Bersano T."/>
            <person name="Bono H."/>
            <person name="Chalk A.M."/>
            <person name="Chiu K.P."/>
            <person name="Choudhary V."/>
            <person name="Christoffels A."/>
            <person name="Clutterbuck D.R."/>
            <person name="Crowe M.L."/>
            <person name="Dalla E."/>
            <person name="Dalrymple B.P."/>
            <person name="de Bono B."/>
            <person name="Della Gatta G."/>
            <person name="di Bernardo D."/>
            <person name="Down T."/>
            <person name="Engstrom P."/>
            <person name="Fagiolini M."/>
            <person name="Faulkner G."/>
            <person name="Fletcher C.F."/>
            <person name="Fukushima T."/>
            <person name="Furuno M."/>
            <person name="Futaki S."/>
            <person name="Gariboldi M."/>
            <person name="Georgii-Hemming P."/>
            <person name="Gingeras T.R."/>
            <person name="Gojobori T."/>
            <person name="Green R.E."/>
            <person name="Gustincich S."/>
            <person name="Harbers M."/>
            <person name="Hayashi Y."/>
            <person name="Hensch T.K."/>
            <person name="Hirokawa N."/>
            <person name="Hill D."/>
            <person name="Huminiecki L."/>
            <person name="Iacono M."/>
            <person name="Ikeo K."/>
            <person name="Iwama A."/>
            <person name="Ishikawa T."/>
            <person name="Jakt M."/>
            <person name="Kanapin A."/>
            <person name="Katoh M."/>
            <person name="Kawasawa Y."/>
            <person name="Kelso J."/>
            <person name="Kitamura H."/>
            <person name="Kitano H."/>
            <person name="Kollias G."/>
            <person name="Krishnan S.P."/>
            <person name="Kruger A."/>
            <person name="Kummerfeld S.K."/>
            <person name="Kurochkin I.V."/>
            <person name="Lareau L.F."/>
            <person name="Lazarevic D."/>
            <person name="Lipovich L."/>
            <person name="Liu J."/>
            <person name="Liuni S."/>
            <person name="McWilliam S."/>
            <person name="Madan Babu M."/>
            <person name="Madera M."/>
            <person name="Marchionni L."/>
            <person name="Matsuda H."/>
            <person name="Matsuzawa S."/>
            <person name="Miki H."/>
            <person name="Mignone F."/>
            <person name="Miyake S."/>
            <person name="Morris K."/>
            <person name="Mottagui-Tabar S."/>
            <person name="Mulder N."/>
            <person name="Nakano N."/>
            <person name="Nakauchi H."/>
            <person name="Ng P."/>
            <person name="Nilsson R."/>
            <person name="Nishiguchi S."/>
            <person name="Nishikawa S."/>
            <person name="Nori F."/>
            <person name="Ohara O."/>
            <person name="Okazaki Y."/>
            <person name="Orlando V."/>
            <person name="Pang K.C."/>
            <person name="Pavan W.J."/>
            <person name="Pavesi G."/>
            <person name="Pesole G."/>
            <person name="Petrovsky N."/>
            <person name="Piazza S."/>
            <person name="Reed J."/>
            <person name="Reid J.F."/>
            <person name="Ring B.Z."/>
            <person name="Ringwald M."/>
            <person name="Rost B."/>
            <person name="Ruan Y."/>
            <person name="Salzberg S.L."/>
            <person name="Sandelin A."/>
            <person name="Schneider C."/>
            <person name="Schoenbach C."/>
            <person name="Sekiguchi K."/>
            <person name="Semple C.A."/>
            <person name="Seno S."/>
            <person name="Sessa L."/>
            <person name="Sheng Y."/>
            <person name="Shibata Y."/>
            <person name="Shimada H."/>
            <person name="Shimada K."/>
            <person name="Silva D."/>
            <person name="Sinclair B."/>
            <person name="Sperling S."/>
            <person name="Stupka E."/>
            <person name="Sugiura K."/>
            <person name="Sultana R."/>
            <person name="Takenaka Y."/>
            <person name="Taki K."/>
            <person name="Tammoja K."/>
            <person name="Tan S.L."/>
            <person name="Tang S."/>
            <person name="Taylor M.S."/>
            <person name="Tegner J."/>
            <person name="Teichmann S.A."/>
            <person name="Ueda H.R."/>
            <person name="van Nimwegen E."/>
            <person name="Verardo R."/>
            <person name="Wei C.L."/>
            <person name="Yagi K."/>
            <person name="Yamanishi H."/>
            <person name="Zabarovsky E."/>
            <person name="Zhu S."/>
            <person name="Zimmer A."/>
            <person name="Hide W."/>
            <person name="Bult C."/>
            <person name="Grimmond S.M."/>
            <person name="Teasdale R.D."/>
            <person name="Liu E.T."/>
            <person name="Brusic V."/>
            <person name="Quackenbush J."/>
            <person name="Wahlestedt C."/>
            <person name="Mattick J.S."/>
            <person name="Hume D.A."/>
            <person name="Kai C."/>
            <person name="Sasaki D."/>
            <person name="Tomaru Y."/>
            <person name="Fukuda S."/>
            <person name="Kanamori-Katayama M."/>
            <person name="Suzuki M."/>
            <person name="Aoki J."/>
            <person name="Arakawa T."/>
            <person name="Iida J."/>
            <person name="Imamura K."/>
            <person name="Itoh M."/>
            <person name="Kato T."/>
            <person name="Kawaji H."/>
            <person name="Kawagashira N."/>
            <person name="Kawashima T."/>
            <person name="Kojima M."/>
            <person name="Kondo S."/>
            <person name="Konno H."/>
            <person name="Nakano K."/>
            <person name="Ninomiya N."/>
            <person name="Nishio T."/>
            <person name="Okada M."/>
            <person name="Plessy C."/>
            <person name="Shibata K."/>
            <person name="Shiraki T."/>
            <person name="Suzuki S."/>
            <person name="Tagami M."/>
            <person name="Waki K."/>
            <person name="Watahiki A."/>
            <person name="Okamura-Oho Y."/>
            <person name="Suzuki H."/>
            <person name="Kawai J."/>
            <person name="Hayashizaki Y."/>
        </authorList>
    </citation>
    <scope>NUCLEOTIDE SEQUENCE [LARGE SCALE MRNA]</scope>
    <source>
        <strain>C57BL/6J</strain>
        <tissue>Cerebellum</tissue>
    </source>
</reference>
<reference key="2">
    <citation type="journal article" date="2004" name="Genome Res.">
        <title>The status, quality, and expansion of the NIH full-length cDNA project: the Mammalian Gene Collection (MGC).</title>
        <authorList>
            <consortium name="The MGC Project Team"/>
        </authorList>
    </citation>
    <scope>NUCLEOTIDE SEQUENCE [LARGE SCALE MRNA]</scope>
</reference>
<reference key="3">
    <citation type="journal article" date="2010" name="Cell">
        <title>A tissue-specific atlas of mouse protein phosphorylation and expression.</title>
        <authorList>
            <person name="Huttlin E.L."/>
            <person name="Jedrychowski M.P."/>
            <person name="Elias J.E."/>
            <person name="Goswami T."/>
            <person name="Rad R."/>
            <person name="Beausoleil S.A."/>
            <person name="Villen J."/>
            <person name="Haas W."/>
            <person name="Sowa M.E."/>
            <person name="Gygi S.P."/>
        </authorList>
    </citation>
    <scope>IDENTIFICATION BY MASS SPECTROMETRY [LARGE SCALE ANALYSIS]</scope>
    <source>
        <tissue>Heart</tissue>
        <tissue>Kidney</tissue>
        <tissue>Liver</tissue>
        <tissue>Pancreas</tissue>
    </source>
</reference>
<dbReference type="EC" id="2.4.1.117" evidence="1"/>
<dbReference type="EMBL" id="AK005296">
    <property type="protein sequence ID" value="BAB23938.1"/>
    <property type="molecule type" value="mRNA"/>
</dbReference>
<dbReference type="EMBL" id="BC027160">
    <property type="protein sequence ID" value="AAH27160.1"/>
    <property type="molecule type" value="mRNA"/>
</dbReference>
<dbReference type="CCDS" id="CCDS17353.1"/>
<dbReference type="RefSeq" id="NP_079718.1">
    <property type="nucleotide sequence ID" value="NM_025442.3"/>
</dbReference>
<dbReference type="SMR" id="Q9DB25"/>
<dbReference type="BioGRID" id="211325">
    <property type="interactions" value="5"/>
</dbReference>
<dbReference type="FunCoup" id="Q9DB25">
    <property type="interactions" value="2017"/>
</dbReference>
<dbReference type="STRING" id="10090.ENSMUSP00000035879"/>
<dbReference type="CAZy" id="GT2">
    <property type="family name" value="Glycosyltransferase Family 2"/>
</dbReference>
<dbReference type="GlyCosmos" id="Q9DB25">
    <property type="glycosylation" value="1 site, No reported glycans"/>
</dbReference>
<dbReference type="iPTMnet" id="Q9DB25"/>
<dbReference type="PhosphoSitePlus" id="Q9DB25"/>
<dbReference type="SwissPalm" id="Q9DB25"/>
<dbReference type="REPRODUCTION-2DPAGE" id="Q9DB25"/>
<dbReference type="jPOST" id="Q9DB25"/>
<dbReference type="PaxDb" id="10090-ENSMUSP00000035879"/>
<dbReference type="ProteomicsDB" id="296020"/>
<dbReference type="Pumba" id="Q9DB25"/>
<dbReference type="Antibodypedia" id="2385">
    <property type="antibodies" value="152 antibodies from 19 providers"/>
</dbReference>
<dbReference type="DNASU" id="66248"/>
<dbReference type="Ensembl" id="ENSMUST00000044567.4">
    <property type="protein sequence ID" value="ENSMUSP00000035879.4"/>
    <property type="gene ID" value="ENSMUSG00000036632.10"/>
</dbReference>
<dbReference type="GeneID" id="66248"/>
<dbReference type="KEGG" id="mmu:66248"/>
<dbReference type="UCSC" id="uc008pft.1">
    <property type="organism name" value="mouse"/>
</dbReference>
<dbReference type="AGR" id="MGI:1913498"/>
<dbReference type="CTD" id="29880"/>
<dbReference type="MGI" id="MGI:1913498">
    <property type="gene designation" value="Alg5"/>
</dbReference>
<dbReference type="VEuPathDB" id="HostDB:ENSMUSG00000036632"/>
<dbReference type="eggNOG" id="KOG2977">
    <property type="taxonomic scope" value="Eukaryota"/>
</dbReference>
<dbReference type="GeneTree" id="ENSGT00940000153481"/>
<dbReference type="HOGENOM" id="CLU_033536_9_1_1"/>
<dbReference type="InParanoid" id="Q9DB25"/>
<dbReference type="OMA" id="HMVNTDA"/>
<dbReference type="OrthoDB" id="3784at2759"/>
<dbReference type="PhylomeDB" id="Q9DB25"/>
<dbReference type="TreeFam" id="TF314844"/>
<dbReference type="Reactome" id="R-MMU-480985">
    <property type="pathway name" value="Synthesis of dolichyl-phosphate-glucose"/>
</dbReference>
<dbReference type="UniPathway" id="UPA00378"/>
<dbReference type="BioGRID-ORCS" id="66248">
    <property type="hits" value="17 hits in 79 CRISPR screens"/>
</dbReference>
<dbReference type="PRO" id="PR:Q9DB25"/>
<dbReference type="Proteomes" id="UP000000589">
    <property type="component" value="Chromosome 3"/>
</dbReference>
<dbReference type="RNAct" id="Q9DB25">
    <property type="molecule type" value="protein"/>
</dbReference>
<dbReference type="Bgee" id="ENSMUSG00000036632">
    <property type="expression patterns" value="Expressed in parotid gland and 248 other cell types or tissues"/>
</dbReference>
<dbReference type="ExpressionAtlas" id="Q9DB25">
    <property type="expression patterns" value="baseline and differential"/>
</dbReference>
<dbReference type="GO" id="GO:0098556">
    <property type="term" value="C:cytoplasmic side of rough endoplasmic reticulum membrane"/>
    <property type="evidence" value="ECO:0000250"/>
    <property type="project" value="UniProtKB"/>
</dbReference>
<dbReference type="GO" id="GO:0004581">
    <property type="term" value="F:dolichyl-phosphate beta-glucosyltransferase activity"/>
    <property type="evidence" value="ECO:0000250"/>
    <property type="project" value="UniProtKB"/>
</dbReference>
<dbReference type="GO" id="GO:0007368">
    <property type="term" value="P:determination of left/right symmetry"/>
    <property type="evidence" value="ECO:0000315"/>
    <property type="project" value="MGI"/>
</dbReference>
<dbReference type="GO" id="GO:0006488">
    <property type="term" value="P:dolichol-linked oligosaccharide biosynthetic process"/>
    <property type="evidence" value="ECO:0000250"/>
    <property type="project" value="UniProtKB"/>
</dbReference>
<dbReference type="GO" id="GO:0006487">
    <property type="term" value="P:protein N-linked glycosylation"/>
    <property type="evidence" value="ECO:0000250"/>
    <property type="project" value="UniProtKB"/>
</dbReference>
<dbReference type="CDD" id="cd04188">
    <property type="entry name" value="DPG_synthase"/>
    <property type="match status" value="1"/>
</dbReference>
<dbReference type="FunFam" id="3.90.550.10:FF:000068">
    <property type="entry name" value="ALG5, dolichyl-phosphate beta-glucosyltransferase"/>
    <property type="match status" value="1"/>
</dbReference>
<dbReference type="Gene3D" id="3.90.550.10">
    <property type="entry name" value="Spore Coat Polysaccharide Biosynthesis Protein SpsA, Chain A"/>
    <property type="match status" value="1"/>
</dbReference>
<dbReference type="InterPro" id="IPR035518">
    <property type="entry name" value="DPG_synthase"/>
</dbReference>
<dbReference type="InterPro" id="IPR001173">
    <property type="entry name" value="Glyco_trans_2-like"/>
</dbReference>
<dbReference type="InterPro" id="IPR029044">
    <property type="entry name" value="Nucleotide-diphossugar_trans"/>
</dbReference>
<dbReference type="PANTHER" id="PTHR10859:SF91">
    <property type="entry name" value="DOLICHYL-PHOSPHATE BETA-GLUCOSYLTRANSFERASE"/>
    <property type="match status" value="1"/>
</dbReference>
<dbReference type="PANTHER" id="PTHR10859">
    <property type="entry name" value="GLYCOSYL TRANSFERASE"/>
    <property type="match status" value="1"/>
</dbReference>
<dbReference type="Pfam" id="PF00535">
    <property type="entry name" value="Glycos_transf_2"/>
    <property type="match status" value="1"/>
</dbReference>
<dbReference type="SUPFAM" id="SSF53448">
    <property type="entry name" value="Nucleotide-diphospho-sugar transferases"/>
    <property type="match status" value="1"/>
</dbReference>
<comment type="function">
    <text evidence="1">Dolichyl-phosphate beta-glucosyltransferase that operates in the biosynthetic pathway of dolichol-linked oligosaccharides, the glycan precursors employed in protein asparagine (N)-glycosylation. The assembly of dolichol-linked oligosaccharides begins on the cytosolic side of the endoplasmic reticulum membrane and finishes in its lumen. The sequential addition of sugars to dolichol pyrophosphate produces dolichol-linked oligosaccharides containing fourteen sugars, including two GlcNAcs, nine mannoses and three glucoses. Once assembled, the oligosaccharide is transferred from the lipid to nascent proteins by oligosaccharyltransferases. Dolichyl-phosphate beta-glucosyltransferase produces dolichyl beta-D-glucosyl phosphate/Dol-P-Glc, the glucose donor substrate used sequentially by ALG6, ALG8 and ALG10 to add glucose residues on top of the Man(9)GlcNAc(2)-PP-Dol structure. These are the three last steps in the biosynthetic pathway of dolichol-linked oligosaccharides to produce Glc(3)Man(9)GlcNAc(2)-PP-Dol. The enzyme is most probably active on the cytoplasmic side of the endoplasmic reticulum while its product Dol-P-Glc is the substrate for ALG6, ALG8 and ALG11 in the lumen of the endoplasmic reticulum.</text>
</comment>
<comment type="catalytic activity">
    <reaction evidence="1">
        <text>a di-trans,poly-cis-dolichyl phosphate + UDP-alpha-D-glucose = a di-trans,poly-cis-dolichyl beta-D-glucosyl phosphate + UDP</text>
        <dbReference type="Rhea" id="RHEA:15401"/>
        <dbReference type="Rhea" id="RHEA-COMP:19498"/>
        <dbReference type="Rhea" id="RHEA-COMP:19502"/>
        <dbReference type="ChEBI" id="CHEBI:57525"/>
        <dbReference type="ChEBI" id="CHEBI:57683"/>
        <dbReference type="ChEBI" id="CHEBI:58223"/>
        <dbReference type="ChEBI" id="CHEBI:58885"/>
        <dbReference type="EC" id="2.4.1.117"/>
    </reaction>
    <physiologicalReaction direction="left-to-right" evidence="1">
        <dbReference type="Rhea" id="RHEA:15402"/>
    </physiologicalReaction>
</comment>
<comment type="pathway">
    <text evidence="1">Protein modification; protein glycosylation.</text>
</comment>
<comment type="subcellular location">
    <subcellularLocation>
        <location evidence="1">Endoplasmic reticulum membrane</location>
        <topology evidence="2">Single-pass membrane protein</topology>
    </subcellularLocation>
</comment>
<comment type="similarity">
    <text evidence="3">Belongs to the glycosyltransferase 2 family.</text>
</comment>
<gene>
    <name evidence="4" type="primary">Alg5</name>
</gene>